<comment type="function">
    <text evidence="2">Likely to be an auxiliary protein of DNA polymerase delta complex and is probably involved in the control of DNA replication and repair by increasing the polymerase's processibility (PubMed:17087725). May function independently of PCNA during DNA repair (PubMed:17087725).</text>
</comment>
<comment type="subunit">
    <text evidence="2">Homotrimer (PubMed:17087725). Interacts with the catalytic subunits of two DNA polymerase complexes: PolD1 in the delta complex and PolE1/DNApol-epsilon255 in the epsilon complex (PubMed:17087725).</text>
</comment>
<comment type="subcellular location">
    <subcellularLocation>
        <location evidence="2">Nucleus</location>
    </subcellularLocation>
    <subcellularLocation>
        <location evidence="2">Chromosome</location>
    </subcellularLocation>
    <subcellularLocation>
        <location evidence="2">Cytoplasm</location>
    </subcellularLocation>
    <text evidence="2">Increased association with chromatin in response to DNA damage caused by methyl methanesulfonate (MMS) and hydrogen peroxide (H2O2), but not in response to DNA damage by UV.</text>
</comment>
<comment type="developmental stage">
    <text evidence="2">Ubiquitously expressed throughout development and in adults.</text>
</comment>
<comment type="similarity">
    <text evidence="4">Belongs to the PCNA family.</text>
</comment>
<reference evidence="5" key="1">
    <citation type="journal article" date="2006" name="FEBS J.">
        <title>Characterization of a second proliferating cell nuclear antigen (PCNA2) from Drosophila melanogaster.</title>
        <authorList>
            <person name="Ruike T."/>
            <person name="Takeuchi R."/>
            <person name="Takata K."/>
            <person name="Oshige M."/>
            <person name="Kasai N."/>
            <person name="Shimanouchi K."/>
            <person name="Kanai Y."/>
            <person name="Nakamura R."/>
            <person name="Sugawara F."/>
            <person name="Sakaguchi K."/>
        </authorList>
    </citation>
    <scope>NUCLEOTIDE SEQUENCE [MRNA]</scope>
    <scope>SUBUNIT</scope>
    <scope>INTERACTION WITH POLD1 AND POLE1</scope>
    <scope>SUBCELLULAR LOCATION</scope>
    <scope>DEVELOPMENTAL STAGE</scope>
</reference>
<reference evidence="7" key="2">
    <citation type="journal article" date="2000" name="Science">
        <title>The genome sequence of Drosophila melanogaster.</title>
        <authorList>
            <person name="Adams M.D."/>
            <person name="Celniker S.E."/>
            <person name="Holt R.A."/>
            <person name="Evans C.A."/>
            <person name="Gocayne J.D."/>
            <person name="Amanatides P.G."/>
            <person name="Scherer S.E."/>
            <person name="Li P.W."/>
            <person name="Hoskins R.A."/>
            <person name="Galle R.F."/>
            <person name="George R.A."/>
            <person name="Lewis S.E."/>
            <person name="Richards S."/>
            <person name="Ashburner M."/>
            <person name="Henderson S.N."/>
            <person name="Sutton G.G."/>
            <person name="Wortman J.R."/>
            <person name="Yandell M.D."/>
            <person name="Zhang Q."/>
            <person name="Chen L.X."/>
            <person name="Brandon R.C."/>
            <person name="Rogers Y.-H.C."/>
            <person name="Blazej R.G."/>
            <person name="Champe M."/>
            <person name="Pfeiffer B.D."/>
            <person name="Wan K.H."/>
            <person name="Doyle C."/>
            <person name="Baxter E.G."/>
            <person name="Helt G."/>
            <person name="Nelson C.R."/>
            <person name="Miklos G.L.G."/>
            <person name="Abril J.F."/>
            <person name="Agbayani A."/>
            <person name="An H.-J."/>
            <person name="Andrews-Pfannkoch C."/>
            <person name="Baldwin D."/>
            <person name="Ballew R.M."/>
            <person name="Basu A."/>
            <person name="Baxendale J."/>
            <person name="Bayraktaroglu L."/>
            <person name="Beasley E.M."/>
            <person name="Beeson K.Y."/>
            <person name="Benos P.V."/>
            <person name="Berman B.P."/>
            <person name="Bhandari D."/>
            <person name="Bolshakov S."/>
            <person name="Borkova D."/>
            <person name="Botchan M.R."/>
            <person name="Bouck J."/>
            <person name="Brokstein P."/>
            <person name="Brottier P."/>
            <person name="Burtis K.C."/>
            <person name="Busam D.A."/>
            <person name="Butler H."/>
            <person name="Cadieu E."/>
            <person name="Center A."/>
            <person name="Chandra I."/>
            <person name="Cherry J.M."/>
            <person name="Cawley S."/>
            <person name="Dahlke C."/>
            <person name="Davenport L.B."/>
            <person name="Davies P."/>
            <person name="de Pablos B."/>
            <person name="Delcher A."/>
            <person name="Deng Z."/>
            <person name="Mays A.D."/>
            <person name="Dew I."/>
            <person name="Dietz S.M."/>
            <person name="Dodson K."/>
            <person name="Doup L.E."/>
            <person name="Downes M."/>
            <person name="Dugan-Rocha S."/>
            <person name="Dunkov B.C."/>
            <person name="Dunn P."/>
            <person name="Durbin K.J."/>
            <person name="Evangelista C.C."/>
            <person name="Ferraz C."/>
            <person name="Ferriera S."/>
            <person name="Fleischmann W."/>
            <person name="Fosler C."/>
            <person name="Gabrielian A.E."/>
            <person name="Garg N.S."/>
            <person name="Gelbart W.M."/>
            <person name="Glasser K."/>
            <person name="Glodek A."/>
            <person name="Gong F."/>
            <person name="Gorrell J.H."/>
            <person name="Gu Z."/>
            <person name="Guan P."/>
            <person name="Harris M."/>
            <person name="Harris N.L."/>
            <person name="Harvey D.A."/>
            <person name="Heiman T.J."/>
            <person name="Hernandez J.R."/>
            <person name="Houck J."/>
            <person name="Hostin D."/>
            <person name="Houston K.A."/>
            <person name="Howland T.J."/>
            <person name="Wei M.-H."/>
            <person name="Ibegwam C."/>
            <person name="Jalali M."/>
            <person name="Kalush F."/>
            <person name="Karpen G.H."/>
            <person name="Ke Z."/>
            <person name="Kennison J.A."/>
            <person name="Ketchum K.A."/>
            <person name="Kimmel B.E."/>
            <person name="Kodira C.D."/>
            <person name="Kraft C.L."/>
            <person name="Kravitz S."/>
            <person name="Kulp D."/>
            <person name="Lai Z."/>
            <person name="Lasko P."/>
            <person name="Lei Y."/>
            <person name="Levitsky A.A."/>
            <person name="Li J.H."/>
            <person name="Li Z."/>
            <person name="Liang Y."/>
            <person name="Lin X."/>
            <person name="Liu X."/>
            <person name="Mattei B."/>
            <person name="McIntosh T.C."/>
            <person name="McLeod M.P."/>
            <person name="McPherson D."/>
            <person name="Merkulov G."/>
            <person name="Milshina N.V."/>
            <person name="Mobarry C."/>
            <person name="Morris J."/>
            <person name="Moshrefi A."/>
            <person name="Mount S.M."/>
            <person name="Moy M."/>
            <person name="Murphy B."/>
            <person name="Murphy L."/>
            <person name="Muzny D.M."/>
            <person name="Nelson D.L."/>
            <person name="Nelson D.R."/>
            <person name="Nelson K.A."/>
            <person name="Nixon K."/>
            <person name="Nusskern D.R."/>
            <person name="Pacleb J.M."/>
            <person name="Palazzolo M."/>
            <person name="Pittman G.S."/>
            <person name="Pan S."/>
            <person name="Pollard J."/>
            <person name="Puri V."/>
            <person name="Reese M.G."/>
            <person name="Reinert K."/>
            <person name="Remington K."/>
            <person name="Saunders R.D.C."/>
            <person name="Scheeler F."/>
            <person name="Shen H."/>
            <person name="Shue B.C."/>
            <person name="Siden-Kiamos I."/>
            <person name="Simpson M."/>
            <person name="Skupski M.P."/>
            <person name="Smith T.J."/>
            <person name="Spier E."/>
            <person name="Spradling A.C."/>
            <person name="Stapleton M."/>
            <person name="Strong R."/>
            <person name="Sun E."/>
            <person name="Svirskas R."/>
            <person name="Tector C."/>
            <person name="Turner R."/>
            <person name="Venter E."/>
            <person name="Wang A.H."/>
            <person name="Wang X."/>
            <person name="Wang Z.-Y."/>
            <person name="Wassarman D.A."/>
            <person name="Weinstock G.M."/>
            <person name="Weissenbach J."/>
            <person name="Williams S.M."/>
            <person name="Woodage T."/>
            <person name="Worley K.C."/>
            <person name="Wu D."/>
            <person name="Yang S."/>
            <person name="Yao Q.A."/>
            <person name="Ye J."/>
            <person name="Yeh R.-F."/>
            <person name="Zaveri J.S."/>
            <person name="Zhan M."/>
            <person name="Zhang G."/>
            <person name="Zhao Q."/>
            <person name="Zheng L."/>
            <person name="Zheng X.H."/>
            <person name="Zhong F.N."/>
            <person name="Zhong W."/>
            <person name="Zhou X."/>
            <person name="Zhu S.C."/>
            <person name="Zhu X."/>
            <person name="Smith H.O."/>
            <person name="Gibbs R.A."/>
            <person name="Myers E.W."/>
            <person name="Rubin G.M."/>
            <person name="Venter J.C."/>
        </authorList>
    </citation>
    <scope>NUCLEOTIDE SEQUENCE [LARGE SCALE GENOMIC DNA]</scope>
    <source>
        <strain>Berkeley</strain>
    </source>
</reference>
<reference evidence="7" key="3">
    <citation type="journal article" date="2002" name="Genome Biol.">
        <title>Annotation of the Drosophila melanogaster euchromatic genome: a systematic review.</title>
        <authorList>
            <person name="Misra S."/>
            <person name="Crosby M.A."/>
            <person name="Mungall C.J."/>
            <person name="Matthews B.B."/>
            <person name="Campbell K.S."/>
            <person name="Hradecky P."/>
            <person name="Huang Y."/>
            <person name="Kaminker J.S."/>
            <person name="Millburn G.H."/>
            <person name="Prochnik S.E."/>
            <person name="Smith C.D."/>
            <person name="Tupy J.L."/>
            <person name="Whitfield E.J."/>
            <person name="Bayraktaroglu L."/>
            <person name="Berman B.P."/>
            <person name="Bettencourt B.R."/>
            <person name="Celniker S.E."/>
            <person name="de Grey A.D.N.J."/>
            <person name="Drysdale R.A."/>
            <person name="Harris N.L."/>
            <person name="Richter J."/>
            <person name="Russo S."/>
            <person name="Schroeder A.J."/>
            <person name="Shu S.Q."/>
            <person name="Stapleton M."/>
            <person name="Yamada C."/>
            <person name="Ashburner M."/>
            <person name="Gelbart W.M."/>
            <person name="Rubin G.M."/>
            <person name="Lewis S.E."/>
        </authorList>
    </citation>
    <scope>GENOME REANNOTATION</scope>
    <source>
        <strain>Berkeley</strain>
    </source>
</reference>
<evidence type="ECO:0000255" key="1"/>
<evidence type="ECO:0000269" key="2">
    <source>
    </source>
</evidence>
<evidence type="ECO:0000303" key="3">
    <source>
    </source>
</evidence>
<evidence type="ECO:0000305" key="4"/>
<evidence type="ECO:0000312" key="5">
    <source>
        <dbReference type="EMBL" id="BAE94851.1"/>
    </source>
</evidence>
<evidence type="ECO:0000312" key="6">
    <source>
        <dbReference type="FlyBase" id="FBgn0032813"/>
    </source>
</evidence>
<evidence type="ECO:0000312" key="7">
    <source>
        <dbReference type="Proteomes" id="UP000000803"/>
    </source>
</evidence>
<sequence>MLEARLSQTLLLKKIVDALKEIIAQGTLDCSENGLELQSMDNSHVSLVALSLASDCFEKFHCDRNVSLGLDLKSLGKVLKCANSDDAVTIKAVDRPEKITLSFESDGKERTADYELKLLNLDQDHMEIPKKDYTCFIQLPSSEFARICRDMSMFDESLTIACSSKGIRFLAKGDLGTANIQLSAGTAMDVSIEVQEPVTQSFAGRYLNTFTKATPLADRVKLYLSDERPLLVEYPIEDYGHIRYYLAPKVNDPDF</sequence>
<keyword id="KW-0158">Chromosome</keyword>
<keyword id="KW-0963">Cytoplasm</keyword>
<keyword id="KW-0235">DNA replication</keyword>
<keyword id="KW-0238">DNA-binding</keyword>
<keyword id="KW-0539">Nucleus</keyword>
<keyword id="KW-1185">Reference proteome</keyword>
<name>PCNA2_DROME</name>
<gene>
    <name evidence="3 6" type="primary">PCNA2</name>
    <name evidence="6" type="ORF">CG10262</name>
</gene>
<accession>Q9VIT0</accession>
<feature type="chain" id="PRO_0000448932" description="Proliferating cell nuclear antigen 2">
    <location>
        <begin position="1"/>
        <end position="255"/>
    </location>
</feature>
<feature type="DNA-binding region" evidence="1">
    <location>
        <begin position="61"/>
        <end position="80"/>
    </location>
</feature>
<dbReference type="EMBL" id="AB195794">
    <property type="protein sequence ID" value="BAE94851.1"/>
    <property type="molecule type" value="mRNA"/>
</dbReference>
<dbReference type="EMBL" id="AE014134">
    <property type="protein sequence ID" value="AAF53835.1"/>
    <property type="molecule type" value="Genomic_DNA"/>
</dbReference>
<dbReference type="RefSeq" id="NP_609994.1">
    <property type="nucleotide sequence ID" value="NM_136150.3"/>
</dbReference>
<dbReference type="SMR" id="Q9VIT0"/>
<dbReference type="DIP" id="DIP-17763N"/>
<dbReference type="FunCoup" id="Q9VIT0">
    <property type="interactions" value="233"/>
</dbReference>
<dbReference type="IntAct" id="Q9VIT0">
    <property type="interactions" value="12"/>
</dbReference>
<dbReference type="STRING" id="7227.FBpp0080803"/>
<dbReference type="PaxDb" id="7227-FBpp0080803"/>
<dbReference type="EnsemblMetazoa" id="FBtr0081262">
    <property type="protein sequence ID" value="FBpp0080803"/>
    <property type="gene ID" value="FBgn0032813"/>
</dbReference>
<dbReference type="GeneID" id="35257"/>
<dbReference type="KEGG" id="dme:Dmel_CG10262"/>
<dbReference type="UCSC" id="CG10262-RA">
    <property type="organism name" value="d. melanogaster"/>
</dbReference>
<dbReference type="AGR" id="FB:FBgn0032813"/>
<dbReference type="CTD" id="35257"/>
<dbReference type="FlyBase" id="FBgn0032813">
    <property type="gene designation" value="PCNA2"/>
</dbReference>
<dbReference type="VEuPathDB" id="VectorBase:FBgn0032813"/>
<dbReference type="eggNOG" id="KOG1636">
    <property type="taxonomic scope" value="Eukaryota"/>
</dbReference>
<dbReference type="GeneTree" id="ENSGT00390000004965"/>
<dbReference type="HOGENOM" id="CLU_043978_3_0_1"/>
<dbReference type="InParanoid" id="Q9VIT0"/>
<dbReference type="OMA" id="KERTADY"/>
<dbReference type="OrthoDB" id="534348at2759"/>
<dbReference type="PhylomeDB" id="Q9VIT0"/>
<dbReference type="SignaLink" id="Q9VIT0"/>
<dbReference type="BioGRID-ORCS" id="35257">
    <property type="hits" value="0 hits in 1 CRISPR screen"/>
</dbReference>
<dbReference type="GenomeRNAi" id="35257"/>
<dbReference type="PRO" id="PR:Q9VIT0"/>
<dbReference type="Proteomes" id="UP000000803">
    <property type="component" value="Chromosome 2L"/>
</dbReference>
<dbReference type="Bgee" id="FBgn0032813">
    <property type="expression patterns" value="Expressed in T neuron T4b (Drosophila) in embryonic/larval optic lobe (Drosophila) and 42 other cell types or tissues"/>
</dbReference>
<dbReference type="ExpressionAtlas" id="Q9VIT0">
    <property type="expression patterns" value="baseline and differential"/>
</dbReference>
<dbReference type="GO" id="GO:0005694">
    <property type="term" value="C:chromosome"/>
    <property type="evidence" value="ECO:0007669"/>
    <property type="project" value="UniProtKB-SubCell"/>
</dbReference>
<dbReference type="GO" id="GO:0005737">
    <property type="term" value="C:cytoplasm"/>
    <property type="evidence" value="ECO:0007669"/>
    <property type="project" value="UniProtKB-SubCell"/>
</dbReference>
<dbReference type="GO" id="GO:0005634">
    <property type="term" value="C:nucleus"/>
    <property type="evidence" value="ECO:0000314"/>
    <property type="project" value="FlyBase"/>
</dbReference>
<dbReference type="GO" id="GO:0043626">
    <property type="term" value="C:PCNA complex"/>
    <property type="evidence" value="ECO:0000318"/>
    <property type="project" value="GO_Central"/>
</dbReference>
<dbReference type="GO" id="GO:0003682">
    <property type="term" value="F:chromatin binding"/>
    <property type="evidence" value="ECO:0000314"/>
    <property type="project" value="UniProtKB"/>
</dbReference>
<dbReference type="GO" id="GO:0003677">
    <property type="term" value="F:DNA binding"/>
    <property type="evidence" value="ECO:0007669"/>
    <property type="project" value="UniProtKB-KW"/>
</dbReference>
<dbReference type="GO" id="GO:0070182">
    <property type="term" value="F:DNA polymerase binding"/>
    <property type="evidence" value="ECO:0000314"/>
    <property type="project" value="FlyBase"/>
</dbReference>
<dbReference type="GO" id="GO:0030337">
    <property type="term" value="F:DNA polymerase processivity factor activity"/>
    <property type="evidence" value="ECO:0000318"/>
    <property type="project" value="GO_Central"/>
</dbReference>
<dbReference type="GO" id="GO:0006974">
    <property type="term" value="P:DNA damage response"/>
    <property type="evidence" value="ECO:0000314"/>
    <property type="project" value="UniProtKB"/>
</dbReference>
<dbReference type="GO" id="GO:0006272">
    <property type="term" value="P:leading strand elongation"/>
    <property type="evidence" value="ECO:0000318"/>
    <property type="project" value="GO_Central"/>
</dbReference>
<dbReference type="GO" id="GO:0006298">
    <property type="term" value="P:mismatch repair"/>
    <property type="evidence" value="ECO:0000318"/>
    <property type="project" value="GO_Central"/>
</dbReference>
<dbReference type="GO" id="GO:0006275">
    <property type="term" value="P:regulation of DNA replication"/>
    <property type="evidence" value="ECO:0007669"/>
    <property type="project" value="InterPro"/>
</dbReference>
<dbReference type="GO" id="GO:0042542">
    <property type="term" value="P:response to hydrogen peroxide"/>
    <property type="evidence" value="ECO:0000314"/>
    <property type="project" value="UniProtKB"/>
</dbReference>
<dbReference type="GO" id="GO:0072702">
    <property type="term" value="P:response to methyl methanesulfonate"/>
    <property type="evidence" value="ECO:0000314"/>
    <property type="project" value="UniProtKB"/>
</dbReference>
<dbReference type="GO" id="GO:0019985">
    <property type="term" value="P:translesion synthesis"/>
    <property type="evidence" value="ECO:0000318"/>
    <property type="project" value="GO_Central"/>
</dbReference>
<dbReference type="CDD" id="cd00577">
    <property type="entry name" value="PCNA"/>
    <property type="match status" value="1"/>
</dbReference>
<dbReference type="FunFam" id="3.70.10.10:FF:000001">
    <property type="entry name" value="Proliferating cell nuclear antigen"/>
    <property type="match status" value="1"/>
</dbReference>
<dbReference type="Gene3D" id="3.70.10.10">
    <property type="match status" value="1"/>
</dbReference>
<dbReference type="HAMAP" id="MF_00317">
    <property type="entry name" value="DNApol_clamp_arch"/>
    <property type="match status" value="1"/>
</dbReference>
<dbReference type="InterPro" id="IPR046938">
    <property type="entry name" value="DNA_clamp_sf"/>
</dbReference>
<dbReference type="InterPro" id="IPR000730">
    <property type="entry name" value="Pr_cel_nuc_antig"/>
</dbReference>
<dbReference type="InterPro" id="IPR022649">
    <property type="entry name" value="Pr_cel_nuc_antig_C"/>
</dbReference>
<dbReference type="InterPro" id="IPR022659">
    <property type="entry name" value="Pr_cel_nuc_antig_CS"/>
</dbReference>
<dbReference type="InterPro" id="IPR022648">
    <property type="entry name" value="Pr_cel_nuc_antig_N"/>
</dbReference>
<dbReference type="NCBIfam" id="TIGR00590">
    <property type="entry name" value="pcna"/>
    <property type="match status" value="1"/>
</dbReference>
<dbReference type="PANTHER" id="PTHR11352">
    <property type="entry name" value="PROLIFERATING CELL NUCLEAR ANTIGEN"/>
    <property type="match status" value="1"/>
</dbReference>
<dbReference type="PANTHER" id="PTHR11352:SF0">
    <property type="entry name" value="PROLIFERATING CELL NUCLEAR ANTIGEN"/>
    <property type="match status" value="1"/>
</dbReference>
<dbReference type="Pfam" id="PF02747">
    <property type="entry name" value="PCNA_C"/>
    <property type="match status" value="1"/>
</dbReference>
<dbReference type="Pfam" id="PF00705">
    <property type="entry name" value="PCNA_N"/>
    <property type="match status" value="1"/>
</dbReference>
<dbReference type="PRINTS" id="PR00339">
    <property type="entry name" value="PCNACYCLIN"/>
</dbReference>
<dbReference type="SUPFAM" id="SSF55979">
    <property type="entry name" value="DNA clamp"/>
    <property type="match status" value="2"/>
</dbReference>
<dbReference type="PROSITE" id="PS01251">
    <property type="entry name" value="PCNA_1"/>
    <property type="match status" value="1"/>
</dbReference>
<protein>
    <recommendedName>
        <fullName evidence="3">Proliferating cell nuclear antigen 2</fullName>
    </recommendedName>
</protein>
<proteinExistence type="evidence at protein level"/>
<organism evidence="7">
    <name type="scientific">Drosophila melanogaster</name>
    <name type="common">Fruit fly</name>
    <dbReference type="NCBI Taxonomy" id="7227"/>
    <lineage>
        <taxon>Eukaryota</taxon>
        <taxon>Metazoa</taxon>
        <taxon>Ecdysozoa</taxon>
        <taxon>Arthropoda</taxon>
        <taxon>Hexapoda</taxon>
        <taxon>Insecta</taxon>
        <taxon>Pterygota</taxon>
        <taxon>Neoptera</taxon>
        <taxon>Endopterygota</taxon>
        <taxon>Diptera</taxon>
        <taxon>Brachycera</taxon>
        <taxon>Muscomorpha</taxon>
        <taxon>Ephydroidea</taxon>
        <taxon>Drosophilidae</taxon>
        <taxon>Drosophila</taxon>
        <taxon>Sophophora</taxon>
    </lineage>
</organism>